<evidence type="ECO:0000255" key="1">
    <source>
        <dbReference type="HAMAP-Rule" id="MF_00038"/>
    </source>
</evidence>
<evidence type="ECO:0000269" key="2">
    <source>
    </source>
</evidence>
<evidence type="ECO:0000269" key="3">
    <source>
    </source>
</evidence>
<evidence type="ECO:0000269" key="4">
    <source>
    </source>
</evidence>
<evidence type="ECO:0000269" key="5">
    <source>
    </source>
</evidence>
<evidence type="ECO:0000269" key="6">
    <source>
    </source>
</evidence>
<evidence type="ECO:0000303" key="7">
    <source>
    </source>
</evidence>
<evidence type="ECO:0000305" key="8"/>
<evidence type="ECO:0000305" key="9">
    <source>
    </source>
</evidence>
<evidence type="ECO:0000305" key="10">
    <source>
    </source>
</evidence>
<evidence type="ECO:0007744" key="11">
    <source>
        <dbReference type="PDB" id="8G01"/>
    </source>
</evidence>
<evidence type="ECO:0007744" key="12">
    <source>
        <dbReference type="PDB" id="8G02"/>
    </source>
</evidence>
<evidence type="ECO:0007829" key="13">
    <source>
        <dbReference type="PDB" id="8G01"/>
    </source>
</evidence>
<comment type="function">
    <text evidence="1 4 5">Catalyzes the initial step of the lipid cycle reactions in the biosynthesis of the cell wall peptidoglycan: transfers peptidoglycan precursor phospho-MurNAc-pentapeptide from UDP-MurNAc-pentapeptide onto the lipid carrier undecaprenyl phosphate, yielding undecaprenyl-pyrophosphoryl-MurNAc-pentapeptide, known as lipid I.</text>
</comment>
<comment type="catalytic activity">
    <reaction evidence="1 9 10">
        <text>UDP-N-acetyl-alpha-D-muramoyl-L-alanyl-gamma-D-glutamyl-meso-2,6-diaminopimeloyl-D-alanyl-D-alanine + di-trans,octa-cis-undecaprenyl phosphate = di-trans,octa-cis-undecaprenyl diphospho-N-acetyl-alpha-D-muramoyl-L-alanyl-D-glutamyl-meso-2,6-diaminopimeloyl-D-alanyl-D-alanine + UMP</text>
        <dbReference type="Rhea" id="RHEA:28386"/>
        <dbReference type="ChEBI" id="CHEBI:57865"/>
        <dbReference type="ChEBI" id="CHEBI:60392"/>
        <dbReference type="ChEBI" id="CHEBI:61386"/>
        <dbReference type="ChEBI" id="CHEBI:61387"/>
        <dbReference type="EC" id="2.7.8.13"/>
    </reaction>
</comment>
<comment type="cofactor">
    <cofactor evidence="1 5">
        <name>Mg(2+)</name>
        <dbReference type="ChEBI" id="CHEBI:18420"/>
    </cofactor>
    <text evidence="5">Replacement of Mg(2+) by Mn(2+) restores only 10% of the activity.</text>
</comment>
<comment type="pathway">
    <text evidence="1 10">Cell wall biogenesis; peptidoglycan biosynthesis.</text>
</comment>
<comment type="subunit">
    <text evidence="6">Homodimer.</text>
</comment>
<comment type="subunit">
    <text evidence="6">(Microbial infection) Interacts with Enterobacteria phage phiX174 lysis protein E (via transmembrane region); this interaction inhibits MraY by blocking lipid access to the active site (PubMed:37440661). Part of the YES complex composed of 2 host Mray molecules, 2 viral lysis protein E molecules and 2 host SlyD molecules (PubMed:37440661).</text>
</comment>
<comment type="subcellular location">
    <subcellularLocation>
        <location evidence="1 3">Cell inner membrane</location>
        <topology evidence="1 3">Multi-pass membrane protein</topology>
    </subcellularLocation>
</comment>
<comment type="similarity">
    <text evidence="1 8">Belongs to the glycosyltransferase 4 family. MraY subfamily.</text>
</comment>
<feature type="chain" id="PRO_0000108820" description="Phospho-N-acetylmuramoyl-pentapeptide-transferase">
    <location>
        <begin position="1"/>
        <end position="360"/>
    </location>
</feature>
<feature type="topological domain" description="Periplasmic" evidence="2">
    <location>
        <begin position="1"/>
        <end position="18"/>
    </location>
</feature>
<feature type="transmembrane region" description="Helical">
    <location>
        <begin position="19"/>
        <end position="45"/>
    </location>
</feature>
<feature type="topological domain" description="Cytoplasmic" evidence="2">
    <location>
        <begin position="46"/>
        <end position="76"/>
    </location>
</feature>
<feature type="transmembrane region" description="Helical">
    <location>
        <begin position="77"/>
        <end position="90"/>
    </location>
</feature>
<feature type="topological domain" description="Periplasmic" evidence="2">
    <location>
        <begin position="91"/>
        <end position="96"/>
    </location>
</feature>
<feature type="transmembrane region" description="Helical">
    <location>
        <begin position="97"/>
        <end position="113"/>
    </location>
</feature>
<feature type="topological domain" description="Cytoplasmic" evidence="2">
    <location>
        <begin position="114"/>
        <end position="133"/>
    </location>
</feature>
<feature type="transmembrane region" description="Helical">
    <location>
        <begin position="134"/>
        <end position="156"/>
    </location>
</feature>
<feature type="topological domain" description="Periplasmic" evidence="2">
    <location>
        <begin position="157"/>
        <end position="173"/>
    </location>
</feature>
<feature type="transmembrane region" description="Helical">
    <location>
        <begin position="174"/>
        <end position="188"/>
    </location>
</feature>
<feature type="topological domain" description="Cytoplasmic" evidence="2">
    <location>
        <begin position="189"/>
        <end position="199"/>
    </location>
</feature>
<feature type="transmembrane region" description="Helical">
    <location>
        <begin position="200"/>
        <end position="220"/>
    </location>
</feature>
<feature type="topological domain" description="Periplasmic" evidence="2">
    <location>
        <begin position="221"/>
        <end position="238"/>
    </location>
</feature>
<feature type="transmembrane region" description="Helical">
    <location>
        <begin position="239"/>
        <end position="251"/>
    </location>
</feature>
<feature type="topological domain" description="Cytoplasmic" evidence="2">
    <location>
        <begin position="252"/>
        <end position="270"/>
    </location>
</feature>
<feature type="transmembrane region" description="Helical">
    <location>
        <begin position="271"/>
        <end position="284"/>
    </location>
</feature>
<feature type="topological domain" description="Periplasmic" evidence="2">
    <location>
        <begin position="285"/>
        <end position="287"/>
    </location>
</feature>
<feature type="transmembrane region" description="Helical">
    <location>
        <begin position="288"/>
        <end position="299"/>
    </location>
</feature>
<feature type="topological domain" description="Cytoplasmic" evidence="2">
    <location>
        <begin position="300"/>
        <end position="341"/>
    </location>
</feature>
<feature type="transmembrane region" description="Helical">
    <location>
        <begin position="342"/>
        <end position="357"/>
    </location>
</feature>
<feature type="topological domain" description="Periplasmic" evidence="2">
    <location>
        <begin position="358"/>
        <end position="360"/>
    </location>
</feature>
<feature type="helix" evidence="13">
    <location>
        <begin position="2"/>
        <end position="10"/>
    </location>
</feature>
<feature type="helix" evidence="13">
    <location>
        <begin position="14"/>
        <end position="20"/>
    </location>
</feature>
<feature type="helix" evidence="13">
    <location>
        <begin position="22"/>
        <end position="53"/>
    </location>
</feature>
<feature type="turn" evidence="13">
    <location>
        <begin position="61"/>
        <end position="67"/>
    </location>
</feature>
<feature type="helix" evidence="13">
    <location>
        <begin position="77"/>
        <end position="90"/>
    </location>
</feature>
<feature type="helix" evidence="13">
    <location>
        <begin position="96"/>
        <end position="120"/>
    </location>
</feature>
<feature type="helix" evidence="13">
    <location>
        <begin position="130"/>
        <end position="152"/>
    </location>
</feature>
<feature type="helix" evidence="13">
    <location>
        <begin position="156"/>
        <end position="158"/>
    </location>
</feature>
<feature type="helix" evidence="13">
    <location>
        <begin position="175"/>
        <end position="193"/>
    </location>
</feature>
<feature type="helix" evidence="13">
    <location>
        <begin position="194"/>
        <end position="196"/>
    </location>
</feature>
<feature type="turn" evidence="13">
    <location>
        <begin position="198"/>
        <end position="201"/>
    </location>
</feature>
<feature type="helix" evidence="13">
    <location>
        <begin position="202"/>
        <end position="219"/>
    </location>
</feature>
<feature type="helix" evidence="13">
    <location>
        <begin position="222"/>
        <end position="228"/>
    </location>
</feature>
<feature type="helix" evidence="13">
    <location>
        <begin position="234"/>
        <end position="238"/>
    </location>
</feature>
<feature type="helix" evidence="13">
    <location>
        <begin position="239"/>
        <end position="254"/>
    </location>
</feature>
<feature type="strand" evidence="13">
    <location>
        <begin position="257"/>
        <end position="260"/>
    </location>
</feature>
<feature type="helix" evidence="13">
    <location>
        <begin position="267"/>
        <end position="284"/>
    </location>
</feature>
<feature type="helix" evidence="13">
    <location>
        <begin position="287"/>
        <end position="293"/>
    </location>
</feature>
<feature type="helix" evidence="13">
    <location>
        <begin position="295"/>
        <end position="313"/>
    </location>
</feature>
<feature type="strand" evidence="13">
    <location>
        <begin position="318"/>
        <end position="323"/>
    </location>
</feature>
<feature type="helix" evidence="13">
    <location>
        <begin position="324"/>
        <end position="330"/>
    </location>
</feature>
<feature type="helix" evidence="13">
    <location>
        <begin position="335"/>
        <end position="359"/>
    </location>
</feature>
<keyword id="KW-0002">3D-structure</keyword>
<keyword id="KW-0131">Cell cycle</keyword>
<keyword id="KW-0132">Cell division</keyword>
<keyword id="KW-0997">Cell inner membrane</keyword>
<keyword id="KW-1003">Cell membrane</keyword>
<keyword id="KW-0133">Cell shape</keyword>
<keyword id="KW-0961">Cell wall biogenesis/degradation</keyword>
<keyword id="KW-0460">Magnesium</keyword>
<keyword id="KW-0472">Membrane</keyword>
<keyword id="KW-0479">Metal-binding</keyword>
<keyword id="KW-0573">Peptidoglycan synthesis</keyword>
<keyword id="KW-1185">Reference proteome</keyword>
<keyword id="KW-0808">Transferase</keyword>
<keyword id="KW-0812">Transmembrane</keyword>
<keyword id="KW-1133">Transmembrane helix</keyword>
<organism>
    <name type="scientific">Escherichia coli (strain K12)</name>
    <dbReference type="NCBI Taxonomy" id="83333"/>
    <lineage>
        <taxon>Bacteria</taxon>
        <taxon>Pseudomonadati</taxon>
        <taxon>Pseudomonadota</taxon>
        <taxon>Gammaproteobacteria</taxon>
        <taxon>Enterobacterales</taxon>
        <taxon>Enterobacteriaceae</taxon>
        <taxon>Escherichia</taxon>
    </lineage>
</organism>
<sequence length="360" mass="39875">MLVWLAEHLVKYYSGFNVFSYLTFRAIVSLLTALFISLWMGPRMIAHLQKLSFGQVVRNDGPESHFSKRGTPTMGGIMILTAIVISVLLWAYPSNPYVWCVLVVLVGYGVIGFVDDYRKVVRKDTKGLIARWKYFWMSVIALGVAFALYLAGKDTPATQLVVPFFKDVMPQLGLFYILLAYFVIVGTGNAVNLTDGLDGLAIMPTVFVAGGFALVAWATGNMNFASYLHIPYLRHAGELVIVCTAIVGAGLGFLWFNTYPAQVFMGDVGSLALGGALGIIAVLLRQEFLLVIMGGVFVVETLSVILQVGSFKLRGQRIFRMAPIHHHYELKGWPEPRVIVRFWIISLMLVLIGLATLKVR</sequence>
<dbReference type="EC" id="2.7.8.13" evidence="1 9 10"/>
<dbReference type="EMBL" id="X51584">
    <property type="protein sequence ID" value="CAA35932.1"/>
    <property type="molecule type" value="Genomic_DNA"/>
</dbReference>
<dbReference type="EMBL" id="X55034">
    <property type="protein sequence ID" value="CAA38864.1"/>
    <property type="molecule type" value="Genomic_DNA"/>
</dbReference>
<dbReference type="EMBL" id="U00096">
    <property type="protein sequence ID" value="AAC73198.1"/>
    <property type="molecule type" value="Genomic_DNA"/>
</dbReference>
<dbReference type="EMBL" id="AP009048">
    <property type="protein sequence ID" value="BAB96655.1"/>
    <property type="molecule type" value="Genomic_DNA"/>
</dbReference>
<dbReference type="PIR" id="S08395">
    <property type="entry name" value="S08395"/>
</dbReference>
<dbReference type="RefSeq" id="NP_414629.1">
    <property type="nucleotide sequence ID" value="NC_000913.3"/>
</dbReference>
<dbReference type="RefSeq" id="WP_000964131.1">
    <property type="nucleotide sequence ID" value="NZ_STEB01000010.1"/>
</dbReference>
<dbReference type="PDB" id="8G01">
    <property type="method" value="EM"/>
    <property type="resolution" value="3.40 A"/>
    <property type="chains" value="A/E=1-360"/>
</dbReference>
<dbReference type="PDB" id="8G02">
    <property type="method" value="EM"/>
    <property type="resolution" value="3.50 A"/>
    <property type="chains" value="A/E=1-360"/>
</dbReference>
<dbReference type="PDB" id="8TLU">
    <property type="method" value="EM"/>
    <property type="resolution" value="3.80 A"/>
    <property type="chains" value="A/E=1-360"/>
</dbReference>
<dbReference type="PDBsum" id="8G01"/>
<dbReference type="PDBsum" id="8G02"/>
<dbReference type="PDBsum" id="8TLU"/>
<dbReference type="EMDB" id="EMD-29641"/>
<dbReference type="EMDB" id="EMD-29642"/>
<dbReference type="EMDB" id="EMD-41373"/>
<dbReference type="SMR" id="P0A6W3"/>
<dbReference type="BioGRID" id="4261478">
    <property type="interactions" value="375"/>
</dbReference>
<dbReference type="FunCoup" id="P0A6W3">
    <property type="interactions" value="638"/>
</dbReference>
<dbReference type="STRING" id="511145.b0087"/>
<dbReference type="BindingDB" id="P0A6W3"/>
<dbReference type="ChEMBL" id="CHEMBL3957"/>
<dbReference type="SwissLipids" id="SLP:000001813"/>
<dbReference type="TCDB" id="9.B.146.1.6">
    <property type="family name" value="the putative undecaprenyl-phosphate n-acetylglucosaminyl transferase (murg) family"/>
</dbReference>
<dbReference type="jPOST" id="P0A6W3"/>
<dbReference type="PaxDb" id="511145-b0087"/>
<dbReference type="EnsemblBacteria" id="AAC73198">
    <property type="protein sequence ID" value="AAC73198"/>
    <property type="gene ID" value="b0087"/>
</dbReference>
<dbReference type="GeneID" id="93777347"/>
<dbReference type="GeneID" id="944814"/>
<dbReference type="KEGG" id="ecj:JW0085"/>
<dbReference type="KEGG" id="eco:b0087"/>
<dbReference type="KEGG" id="ecoc:C3026_00340"/>
<dbReference type="PATRIC" id="fig|1411691.4.peg.2193"/>
<dbReference type="EchoBASE" id="EB0599"/>
<dbReference type="eggNOG" id="COG0472">
    <property type="taxonomic scope" value="Bacteria"/>
</dbReference>
<dbReference type="HOGENOM" id="CLU_023982_0_0_6"/>
<dbReference type="InParanoid" id="P0A6W3"/>
<dbReference type="OMA" id="DTPTMGG"/>
<dbReference type="OrthoDB" id="9805475at2"/>
<dbReference type="PhylomeDB" id="P0A6W3"/>
<dbReference type="BioCyc" id="EcoCyc:PHOSNACMURPENTATRANS-MONOMER"/>
<dbReference type="BioCyc" id="MetaCyc:PHOSNACMURPENTATRANS-MONOMER"/>
<dbReference type="UniPathway" id="UPA00219"/>
<dbReference type="PRO" id="PR:P0A6W3"/>
<dbReference type="Proteomes" id="UP000000625">
    <property type="component" value="Chromosome"/>
</dbReference>
<dbReference type="GO" id="GO:0016020">
    <property type="term" value="C:membrane"/>
    <property type="evidence" value="ECO:0000314"/>
    <property type="project" value="EcoCyc"/>
</dbReference>
<dbReference type="GO" id="GO:0005886">
    <property type="term" value="C:plasma membrane"/>
    <property type="evidence" value="ECO:0000318"/>
    <property type="project" value="GO_Central"/>
</dbReference>
<dbReference type="GO" id="GO:0046872">
    <property type="term" value="F:metal ion binding"/>
    <property type="evidence" value="ECO:0007669"/>
    <property type="project" value="UniProtKB-KW"/>
</dbReference>
<dbReference type="GO" id="GO:0008963">
    <property type="term" value="F:phospho-N-acetylmuramoyl-pentapeptide-transferase activity"/>
    <property type="evidence" value="ECO:0000314"/>
    <property type="project" value="EcoliWiki"/>
</dbReference>
<dbReference type="GO" id="GO:0051992">
    <property type="term" value="F:UDP-N-acetylmuramoyl-L-alanyl-D-glutamyl-meso-2,6-diaminopimelyl-D-alanyl-D-alanine:undecaprenyl-phosphate transferase activity"/>
    <property type="evidence" value="ECO:0007669"/>
    <property type="project" value="RHEA"/>
</dbReference>
<dbReference type="GO" id="GO:0051301">
    <property type="term" value="P:cell division"/>
    <property type="evidence" value="ECO:0007669"/>
    <property type="project" value="UniProtKB-KW"/>
</dbReference>
<dbReference type="GO" id="GO:0044038">
    <property type="term" value="P:cell wall macromolecule biosynthetic process"/>
    <property type="evidence" value="ECO:0000318"/>
    <property type="project" value="GO_Central"/>
</dbReference>
<dbReference type="GO" id="GO:0071555">
    <property type="term" value="P:cell wall organization"/>
    <property type="evidence" value="ECO:0000318"/>
    <property type="project" value="GO_Central"/>
</dbReference>
<dbReference type="GO" id="GO:0009252">
    <property type="term" value="P:peptidoglycan biosynthetic process"/>
    <property type="evidence" value="ECO:0007669"/>
    <property type="project" value="UniProtKB-UniRule"/>
</dbReference>
<dbReference type="GO" id="GO:0008360">
    <property type="term" value="P:regulation of cell shape"/>
    <property type="evidence" value="ECO:0007669"/>
    <property type="project" value="UniProtKB-KW"/>
</dbReference>
<dbReference type="CDD" id="cd06852">
    <property type="entry name" value="GT_MraY"/>
    <property type="match status" value="1"/>
</dbReference>
<dbReference type="HAMAP" id="MF_00038">
    <property type="entry name" value="MraY"/>
    <property type="match status" value="1"/>
</dbReference>
<dbReference type="InterPro" id="IPR000715">
    <property type="entry name" value="Glycosyl_transferase_4"/>
</dbReference>
<dbReference type="InterPro" id="IPR003524">
    <property type="entry name" value="PNAcMuramoyl-5peptid_Trfase"/>
</dbReference>
<dbReference type="InterPro" id="IPR018480">
    <property type="entry name" value="PNAcMuramoyl-5peptid_Trfase_CS"/>
</dbReference>
<dbReference type="NCBIfam" id="TIGR00445">
    <property type="entry name" value="mraY"/>
    <property type="match status" value="1"/>
</dbReference>
<dbReference type="PANTHER" id="PTHR22926">
    <property type="entry name" value="PHOSPHO-N-ACETYLMURAMOYL-PENTAPEPTIDE-TRANSFERASE"/>
    <property type="match status" value="1"/>
</dbReference>
<dbReference type="PANTHER" id="PTHR22926:SF5">
    <property type="entry name" value="PHOSPHO-N-ACETYLMURAMOYL-PENTAPEPTIDE-TRANSFERASE HOMOLOG"/>
    <property type="match status" value="1"/>
</dbReference>
<dbReference type="Pfam" id="PF00953">
    <property type="entry name" value="Glycos_transf_4"/>
    <property type="match status" value="1"/>
</dbReference>
<dbReference type="Pfam" id="PF10555">
    <property type="entry name" value="MraY_sig1"/>
    <property type="match status" value="1"/>
</dbReference>
<dbReference type="PROSITE" id="PS01347">
    <property type="entry name" value="MRAY_1"/>
    <property type="match status" value="1"/>
</dbReference>
<dbReference type="PROSITE" id="PS01348">
    <property type="entry name" value="MRAY_2"/>
    <property type="match status" value="1"/>
</dbReference>
<proteinExistence type="evidence at protein level"/>
<name>MRAY_ECOLI</name>
<protein>
    <recommendedName>
        <fullName evidence="1">Phospho-N-acetylmuramoyl-pentapeptide-transferase</fullName>
        <ecNumber evidence="1 9 10">2.7.8.13</ecNumber>
    </recommendedName>
    <alternativeName>
        <fullName evidence="1">UDP-MurNAc-pentapeptide phosphotransferase</fullName>
    </alternativeName>
</protein>
<accession>P0A6W3</accession>
<accession>P15876</accession>
<gene>
    <name evidence="1 7" type="primary">mraY</name>
    <name type="synonym">murX</name>
    <name type="ordered locus">b0087</name>
    <name type="ordered locus">JW0085</name>
</gene>
<reference key="1">
    <citation type="journal article" date="1990" name="Nucleic Acids Res.">
        <title>Nucleotide sequence involving murD and an open reading frame ORF-Y spacing murF and ftsW in Escherichia coli.</title>
        <authorList>
            <person name="Ikeda M."/>
            <person name="Wachi M."/>
            <person name="Ishino F."/>
            <person name="Matsuhashi M."/>
        </authorList>
    </citation>
    <scope>NUCLEOTIDE SEQUENCE [GENOMIC DNA]</scope>
    <source>
        <strain>K12</strain>
    </source>
</reference>
<reference key="2">
    <citation type="journal article" date="1992" name="Nucleic Acids Res.">
        <title>Systematic sequencing of the Escherichia coli genome: analysis of the 0-2.4 min region.</title>
        <authorList>
            <person name="Yura T."/>
            <person name="Mori H."/>
            <person name="Nagai H."/>
            <person name="Nagata T."/>
            <person name="Ishihama A."/>
            <person name="Fujita N."/>
            <person name="Isono K."/>
            <person name="Mizobuchi K."/>
            <person name="Nakata A."/>
        </authorList>
    </citation>
    <scope>NUCLEOTIDE SEQUENCE [LARGE SCALE GENOMIC DNA]</scope>
    <source>
        <strain>K12</strain>
    </source>
</reference>
<reference key="3">
    <citation type="journal article" date="1997" name="Science">
        <title>The complete genome sequence of Escherichia coli K-12.</title>
        <authorList>
            <person name="Blattner F.R."/>
            <person name="Plunkett G. III"/>
            <person name="Bloch C.A."/>
            <person name="Perna N.T."/>
            <person name="Burland V."/>
            <person name="Riley M."/>
            <person name="Collado-Vides J."/>
            <person name="Glasner J.D."/>
            <person name="Rode C.K."/>
            <person name="Mayhew G.F."/>
            <person name="Gregor J."/>
            <person name="Davis N.W."/>
            <person name="Kirkpatrick H.A."/>
            <person name="Goeden M.A."/>
            <person name="Rose D.J."/>
            <person name="Mau B."/>
            <person name="Shao Y."/>
        </authorList>
    </citation>
    <scope>NUCLEOTIDE SEQUENCE [LARGE SCALE GENOMIC DNA]</scope>
    <source>
        <strain>K12 / MG1655 / ATCC 47076</strain>
    </source>
</reference>
<reference key="4">
    <citation type="journal article" date="2006" name="Mol. Syst. Biol.">
        <title>Highly accurate genome sequences of Escherichia coli K-12 strains MG1655 and W3110.</title>
        <authorList>
            <person name="Hayashi K."/>
            <person name="Morooka N."/>
            <person name="Yamamoto Y."/>
            <person name="Fujita K."/>
            <person name="Isono K."/>
            <person name="Choi S."/>
            <person name="Ohtsubo E."/>
            <person name="Baba T."/>
            <person name="Wanner B.L."/>
            <person name="Mori H."/>
            <person name="Horiuchi T."/>
        </authorList>
    </citation>
    <scope>NUCLEOTIDE SEQUENCE [LARGE SCALE GENOMIC DNA]</scope>
    <source>
        <strain>K12 / W3110 / ATCC 27325 / DSM 5911</strain>
    </source>
</reference>
<reference key="5">
    <citation type="journal article" date="1978" name="Biochim. Biophys. Acta">
        <title>Phospho-N-acetylmuramoyl-pentapeptide-transferase of Escherichia coli K12. Properties of the membrane-bound and the extracted and partially purified enzyme.</title>
        <authorList>
            <person name="Geis A."/>
            <person name="Plapp R."/>
        </authorList>
    </citation>
    <scope>FUNCTION</scope>
    <scope>CATALYTIC ACTIVITY</scope>
    <scope>COFACTOR</scope>
    <scope>PATHWAY</scope>
    <source>
        <strain>K12</strain>
    </source>
</reference>
<reference key="6">
    <citation type="journal article" date="1991" name="J. Bacteriol.">
        <title>The Escherichia coli mraY gene encoding UDP-N-acetylmuramoyl-pentapeptide: undecaprenyl-phosphate phospho-N-acetylmuramoyl-pentapeptide transferase.</title>
        <authorList>
            <person name="Ikeda M."/>
            <person name="Wachi M."/>
            <person name="Jung H.K."/>
            <person name="Ishino F."/>
            <person name="Matsuhashi M."/>
        </authorList>
    </citation>
    <scope>FUNCTION</scope>
    <scope>CATALYTIC ACTIVITY</scope>
    <source>
        <strain>K12</strain>
    </source>
</reference>
<reference key="7">
    <citation type="journal article" date="1999" name="Mol. Microbiol.">
        <title>Topological analysis of the mraY protein catalyzing the first membrane step of peptidoglycan synthesis.</title>
        <authorList>
            <person name="Bouhss A."/>
            <person name="Mengin-Lecreulx D."/>
            <person name="Le Beller D."/>
            <person name="Van Heijenoort J."/>
        </authorList>
    </citation>
    <scope>TOPOLOGY</scope>
</reference>
<reference key="8">
    <citation type="journal article" date="2005" name="Science">
        <title>Global topology analysis of the Escherichia coli inner membrane proteome.</title>
        <authorList>
            <person name="Daley D.O."/>
            <person name="Rapp M."/>
            <person name="Granseth E."/>
            <person name="Melen K."/>
            <person name="Drew D."/>
            <person name="von Heijne G."/>
        </authorList>
    </citation>
    <scope>SUBCELLULAR LOCATION</scope>
    <source>
        <strain>K12 / MG1655 / ATCC 47076</strain>
    </source>
</reference>
<reference evidence="11 12" key="9">
    <citation type="journal article" date="2023" name="Science">
        <title>The mechanism of the phage-encoded protein antibiotic from PhiX174.</title>
        <authorList>
            <person name="Orta A.K."/>
            <person name="Riera N."/>
            <person name="Li Y.E."/>
            <person name="Tanaka S."/>
            <person name="Yun H.G."/>
            <person name="Klaic L."/>
            <person name="Clemons W.M. Jr."/>
        </authorList>
    </citation>
    <scope>STRUCTURE BY ELECTRON MICROSCOPY (3.40 ANGSTROMS)</scope>
    <scope>SUBUNIT</scope>
    <scope>IDENTIFICATION IN THE YES COMPLEX (MICROBIAL INFECTION)</scope>
    <scope>INTERACTION WITH ENTEROBACTERIA PHAGE PHIX174 LYSIS PROTEIN E (MICROBIAL INFECTION)</scope>
</reference>